<proteinExistence type="inferred from homology"/>
<accession>A5CXE4</accession>
<dbReference type="EC" id="2.1.1.107" evidence="1"/>
<dbReference type="EC" id="1.3.1.76" evidence="1"/>
<dbReference type="EC" id="4.99.1.4" evidence="1"/>
<dbReference type="EMBL" id="AP009247">
    <property type="protein sequence ID" value="BAF61384.1"/>
    <property type="molecule type" value="Genomic_DNA"/>
</dbReference>
<dbReference type="RefSeq" id="WP_011929654.1">
    <property type="nucleotide sequence ID" value="NC_009465.1"/>
</dbReference>
<dbReference type="SMR" id="A5CXE4"/>
<dbReference type="STRING" id="412965.COSY_0254"/>
<dbReference type="KEGG" id="vok:COSY_0254"/>
<dbReference type="eggNOG" id="COG0007">
    <property type="taxonomic scope" value="Bacteria"/>
</dbReference>
<dbReference type="eggNOG" id="COG1648">
    <property type="taxonomic scope" value="Bacteria"/>
</dbReference>
<dbReference type="HOGENOM" id="CLU_011276_2_1_6"/>
<dbReference type="OrthoDB" id="9815856at2"/>
<dbReference type="UniPathway" id="UPA00148">
    <property type="reaction ID" value="UER00211"/>
</dbReference>
<dbReference type="UniPathway" id="UPA00148">
    <property type="reaction ID" value="UER00222"/>
</dbReference>
<dbReference type="UniPathway" id="UPA00262">
    <property type="reaction ID" value="UER00211"/>
</dbReference>
<dbReference type="UniPathway" id="UPA00262">
    <property type="reaction ID" value="UER00222"/>
</dbReference>
<dbReference type="UniPathway" id="UPA00262">
    <property type="reaction ID" value="UER00376"/>
</dbReference>
<dbReference type="Proteomes" id="UP000000247">
    <property type="component" value="Chromosome"/>
</dbReference>
<dbReference type="GO" id="GO:0051287">
    <property type="term" value="F:NAD binding"/>
    <property type="evidence" value="ECO:0007669"/>
    <property type="project" value="InterPro"/>
</dbReference>
<dbReference type="GO" id="GO:0043115">
    <property type="term" value="F:precorrin-2 dehydrogenase activity"/>
    <property type="evidence" value="ECO:0007669"/>
    <property type="project" value="UniProtKB-UniRule"/>
</dbReference>
<dbReference type="GO" id="GO:0051266">
    <property type="term" value="F:sirohydrochlorin ferrochelatase activity"/>
    <property type="evidence" value="ECO:0007669"/>
    <property type="project" value="UniProtKB-EC"/>
</dbReference>
<dbReference type="GO" id="GO:0004851">
    <property type="term" value="F:uroporphyrin-III C-methyltransferase activity"/>
    <property type="evidence" value="ECO:0007669"/>
    <property type="project" value="UniProtKB-UniRule"/>
</dbReference>
<dbReference type="GO" id="GO:0009236">
    <property type="term" value="P:cobalamin biosynthetic process"/>
    <property type="evidence" value="ECO:0007669"/>
    <property type="project" value="UniProtKB-UniRule"/>
</dbReference>
<dbReference type="GO" id="GO:0032259">
    <property type="term" value="P:methylation"/>
    <property type="evidence" value="ECO:0007669"/>
    <property type="project" value="UniProtKB-KW"/>
</dbReference>
<dbReference type="GO" id="GO:0019354">
    <property type="term" value="P:siroheme biosynthetic process"/>
    <property type="evidence" value="ECO:0007669"/>
    <property type="project" value="UniProtKB-UniRule"/>
</dbReference>
<dbReference type="CDD" id="cd11642">
    <property type="entry name" value="SUMT"/>
    <property type="match status" value="1"/>
</dbReference>
<dbReference type="FunFam" id="3.30.160.110:FF:000001">
    <property type="entry name" value="Siroheme synthase"/>
    <property type="match status" value="1"/>
</dbReference>
<dbReference type="FunFam" id="3.30.950.10:FF:000001">
    <property type="entry name" value="Siroheme synthase"/>
    <property type="match status" value="1"/>
</dbReference>
<dbReference type="FunFam" id="3.40.1010.10:FF:000001">
    <property type="entry name" value="Siroheme synthase"/>
    <property type="match status" value="1"/>
</dbReference>
<dbReference type="Gene3D" id="3.40.1010.10">
    <property type="entry name" value="Cobalt-precorrin-4 Transmethylase, Domain 1"/>
    <property type="match status" value="1"/>
</dbReference>
<dbReference type="Gene3D" id="3.30.950.10">
    <property type="entry name" value="Methyltransferase, Cobalt-precorrin-4 Transmethylase, Domain 2"/>
    <property type="match status" value="1"/>
</dbReference>
<dbReference type="Gene3D" id="3.40.50.720">
    <property type="entry name" value="NAD(P)-binding Rossmann-like Domain"/>
    <property type="match status" value="1"/>
</dbReference>
<dbReference type="Gene3D" id="1.10.8.210">
    <property type="entry name" value="Sirohaem synthase, dimerisation domain"/>
    <property type="match status" value="1"/>
</dbReference>
<dbReference type="Gene3D" id="3.30.160.110">
    <property type="entry name" value="Siroheme synthase, domain 2"/>
    <property type="match status" value="1"/>
</dbReference>
<dbReference type="HAMAP" id="MF_01646">
    <property type="entry name" value="Siroheme_synth"/>
    <property type="match status" value="1"/>
</dbReference>
<dbReference type="InterPro" id="IPR000878">
    <property type="entry name" value="4pyrrol_Mease"/>
</dbReference>
<dbReference type="InterPro" id="IPR035996">
    <property type="entry name" value="4pyrrol_Methylase_sf"/>
</dbReference>
<dbReference type="InterPro" id="IPR014777">
    <property type="entry name" value="4pyrrole_Mease_sub1"/>
</dbReference>
<dbReference type="InterPro" id="IPR014776">
    <property type="entry name" value="4pyrrole_Mease_sub2"/>
</dbReference>
<dbReference type="InterPro" id="IPR006366">
    <property type="entry name" value="CobA/CysG_C"/>
</dbReference>
<dbReference type="InterPro" id="IPR036291">
    <property type="entry name" value="NAD(P)-bd_dom_sf"/>
</dbReference>
<dbReference type="InterPro" id="IPR050161">
    <property type="entry name" value="Siro_Cobalamin_biosynth"/>
</dbReference>
<dbReference type="InterPro" id="IPR037115">
    <property type="entry name" value="Sirohaem_synt_dimer_dom_sf"/>
</dbReference>
<dbReference type="InterPro" id="IPR012409">
    <property type="entry name" value="Sirohaem_synth"/>
</dbReference>
<dbReference type="InterPro" id="IPR028281">
    <property type="entry name" value="Sirohaem_synthase_central"/>
</dbReference>
<dbReference type="InterPro" id="IPR019478">
    <property type="entry name" value="Sirohaem_synthase_dimer_dom"/>
</dbReference>
<dbReference type="InterPro" id="IPR006367">
    <property type="entry name" value="Sirohaem_synthase_N"/>
</dbReference>
<dbReference type="InterPro" id="IPR003043">
    <property type="entry name" value="Uropor_MeTrfase_CS"/>
</dbReference>
<dbReference type="NCBIfam" id="TIGR01469">
    <property type="entry name" value="cobA_cysG_Cterm"/>
    <property type="match status" value="1"/>
</dbReference>
<dbReference type="NCBIfam" id="TIGR01470">
    <property type="entry name" value="cysG_Nterm"/>
    <property type="match status" value="1"/>
</dbReference>
<dbReference type="NCBIfam" id="NF004790">
    <property type="entry name" value="PRK06136.1"/>
    <property type="match status" value="1"/>
</dbReference>
<dbReference type="NCBIfam" id="NF007922">
    <property type="entry name" value="PRK10637.1"/>
    <property type="match status" value="1"/>
</dbReference>
<dbReference type="PANTHER" id="PTHR45790:SF1">
    <property type="entry name" value="SIROHEME SYNTHASE"/>
    <property type="match status" value="1"/>
</dbReference>
<dbReference type="PANTHER" id="PTHR45790">
    <property type="entry name" value="SIROHEME SYNTHASE-RELATED"/>
    <property type="match status" value="1"/>
</dbReference>
<dbReference type="Pfam" id="PF10414">
    <property type="entry name" value="CysG_dimeriser"/>
    <property type="match status" value="1"/>
</dbReference>
<dbReference type="Pfam" id="PF13241">
    <property type="entry name" value="NAD_binding_7"/>
    <property type="match status" value="1"/>
</dbReference>
<dbReference type="Pfam" id="PF14824">
    <property type="entry name" value="Sirohm_synth_M"/>
    <property type="match status" value="1"/>
</dbReference>
<dbReference type="Pfam" id="PF00590">
    <property type="entry name" value="TP_methylase"/>
    <property type="match status" value="1"/>
</dbReference>
<dbReference type="PIRSF" id="PIRSF036426">
    <property type="entry name" value="Sirohaem_synth"/>
    <property type="match status" value="1"/>
</dbReference>
<dbReference type="SUPFAM" id="SSF51735">
    <property type="entry name" value="NAD(P)-binding Rossmann-fold domains"/>
    <property type="match status" value="1"/>
</dbReference>
<dbReference type="SUPFAM" id="SSF75615">
    <property type="entry name" value="Siroheme synthase middle domains-like"/>
    <property type="match status" value="1"/>
</dbReference>
<dbReference type="SUPFAM" id="SSF53790">
    <property type="entry name" value="Tetrapyrrole methylase"/>
    <property type="match status" value="1"/>
</dbReference>
<dbReference type="PROSITE" id="PS00840">
    <property type="entry name" value="SUMT_2"/>
    <property type="match status" value="1"/>
</dbReference>
<evidence type="ECO:0000255" key="1">
    <source>
        <dbReference type="HAMAP-Rule" id="MF_01646"/>
    </source>
</evidence>
<organism>
    <name type="scientific">Vesicomyosocius okutanii subsp. Calyptogena okutanii (strain HA)</name>
    <dbReference type="NCBI Taxonomy" id="412965"/>
    <lineage>
        <taxon>Bacteria</taxon>
        <taxon>Pseudomonadati</taxon>
        <taxon>Pseudomonadota</taxon>
        <taxon>Gammaproteobacteria</taxon>
        <taxon>Candidatus Pseudothioglobaceae</taxon>
        <taxon>Candidatus Vesicomyosocius</taxon>
    </lineage>
</organism>
<gene>
    <name evidence="1" type="primary">cysG</name>
    <name type="ordered locus">COSY_0254</name>
</gene>
<protein>
    <recommendedName>
        <fullName evidence="1">Siroheme synthase</fullName>
    </recommendedName>
    <domain>
        <recommendedName>
            <fullName evidence="1">Uroporphyrinogen-III C-methyltransferase</fullName>
            <shortName evidence="1">Urogen III methylase</shortName>
            <ecNumber evidence="1">2.1.1.107</ecNumber>
        </recommendedName>
        <alternativeName>
            <fullName evidence="1">SUMT</fullName>
        </alternativeName>
        <alternativeName>
            <fullName evidence="1">Uroporphyrinogen III methylase</fullName>
            <shortName evidence="1">UROM</shortName>
        </alternativeName>
    </domain>
    <domain>
        <recommendedName>
            <fullName evidence="1">Precorrin-2 dehydrogenase</fullName>
            <ecNumber evidence="1">1.3.1.76</ecNumber>
        </recommendedName>
    </domain>
    <domain>
        <recommendedName>
            <fullName evidence="1">Sirohydrochlorin ferrochelatase</fullName>
            <ecNumber evidence="1">4.99.1.4</ecNumber>
        </recommendedName>
    </domain>
</protein>
<name>CYSG_VESOH</name>
<sequence length="466" mass="51511">MNYLPIFIDIKQKPCLVVGGGSIAYRKINLLLKAYGQVTCIAKSSCKNVAKLVNNKKIIYIERSFESSDVNGQVLIISATNNATLNKKVSELASQNNIPVNVIDSPDLCTFIMPSIVDRSPILIAISSAGKAPVLARIIRAKLESTLPHAYGKLAELAGNFRDQVKAKFSRIEDKRYFWEEIFSGIIAEKVFSGKIQEAKADLQAQLNNTVEAQVGAVYLVGGGPGDPDLLTFRALRLMQQADVVLYDRLVSDRVMELVRRDAQLIYVGKECDNHAVPQGDINQLLVDLAKEGRRVCRLKGGDPFIFGRGGEEIETLAENGIPFQVVPGITAASGCSTYSGIPLTHRDYSQSCRFVTGHLKDGSMNLPWHELAIEQQTIVFYMALNSVEYLSGQLIIHNMRPDMPVALVEKGTTPEQKVYITTLKELPNLVENETIHAPTLIIIGEVVKLREKLNWFDAKPISSKK</sequence>
<comment type="function">
    <text evidence="1">Multifunctional enzyme that catalyzes the SAM-dependent methylations of uroporphyrinogen III at position C-2 and C-7 to form precorrin-2 via precorrin-1. Then it catalyzes the NAD-dependent ring dehydrogenation of precorrin-2 to yield sirohydrochlorin. Finally, it catalyzes the ferrochelation of sirohydrochlorin to yield siroheme.</text>
</comment>
<comment type="catalytic activity">
    <reaction evidence="1">
        <text>uroporphyrinogen III + 2 S-adenosyl-L-methionine = precorrin-2 + 2 S-adenosyl-L-homocysteine + H(+)</text>
        <dbReference type="Rhea" id="RHEA:32459"/>
        <dbReference type="ChEBI" id="CHEBI:15378"/>
        <dbReference type="ChEBI" id="CHEBI:57308"/>
        <dbReference type="ChEBI" id="CHEBI:57856"/>
        <dbReference type="ChEBI" id="CHEBI:58827"/>
        <dbReference type="ChEBI" id="CHEBI:59789"/>
        <dbReference type="EC" id="2.1.1.107"/>
    </reaction>
</comment>
<comment type="catalytic activity">
    <reaction evidence="1">
        <text>precorrin-2 + NAD(+) = sirohydrochlorin + NADH + 2 H(+)</text>
        <dbReference type="Rhea" id="RHEA:15613"/>
        <dbReference type="ChEBI" id="CHEBI:15378"/>
        <dbReference type="ChEBI" id="CHEBI:57540"/>
        <dbReference type="ChEBI" id="CHEBI:57945"/>
        <dbReference type="ChEBI" id="CHEBI:58351"/>
        <dbReference type="ChEBI" id="CHEBI:58827"/>
        <dbReference type="EC" id="1.3.1.76"/>
    </reaction>
</comment>
<comment type="catalytic activity">
    <reaction evidence="1">
        <text>siroheme + 2 H(+) = sirohydrochlorin + Fe(2+)</text>
        <dbReference type="Rhea" id="RHEA:24360"/>
        <dbReference type="ChEBI" id="CHEBI:15378"/>
        <dbReference type="ChEBI" id="CHEBI:29033"/>
        <dbReference type="ChEBI" id="CHEBI:58351"/>
        <dbReference type="ChEBI" id="CHEBI:60052"/>
        <dbReference type="EC" id="4.99.1.4"/>
    </reaction>
</comment>
<comment type="pathway">
    <text evidence="1">Cofactor biosynthesis; adenosylcobalamin biosynthesis; precorrin-2 from uroporphyrinogen III: step 1/1.</text>
</comment>
<comment type="pathway">
    <text evidence="1">Cofactor biosynthesis; adenosylcobalamin biosynthesis; sirohydrochlorin from precorrin-2: step 1/1.</text>
</comment>
<comment type="pathway">
    <text evidence="1">Porphyrin-containing compound metabolism; siroheme biosynthesis; precorrin-2 from uroporphyrinogen III: step 1/1.</text>
</comment>
<comment type="pathway">
    <text evidence="1">Porphyrin-containing compound metabolism; siroheme biosynthesis; siroheme from sirohydrochlorin: step 1/1.</text>
</comment>
<comment type="pathway">
    <text evidence="1">Porphyrin-containing compound metabolism; siroheme biosynthesis; sirohydrochlorin from precorrin-2: step 1/1.</text>
</comment>
<comment type="similarity">
    <text evidence="1">In the N-terminal section; belongs to the precorrin-2 dehydrogenase / sirohydrochlorin ferrochelatase family.</text>
</comment>
<comment type="similarity">
    <text evidence="1">In the C-terminal section; belongs to the precorrin methyltransferase family.</text>
</comment>
<feature type="chain" id="PRO_0000330567" description="Siroheme synthase">
    <location>
        <begin position="1"/>
        <end position="466"/>
    </location>
</feature>
<feature type="region of interest" description="Precorrin-2 dehydrogenase /sirohydrochlorin ferrochelatase" evidence="1">
    <location>
        <begin position="1"/>
        <end position="203"/>
    </location>
</feature>
<feature type="region of interest" description="Uroporphyrinogen-III C-methyltransferase" evidence="1">
    <location>
        <begin position="216"/>
        <end position="466"/>
    </location>
</feature>
<feature type="active site" description="Proton acceptor" evidence="1">
    <location>
        <position position="248"/>
    </location>
</feature>
<feature type="active site" description="Proton donor" evidence="1">
    <location>
        <position position="270"/>
    </location>
</feature>
<feature type="binding site" evidence="1">
    <location>
        <begin position="22"/>
        <end position="23"/>
    </location>
    <ligand>
        <name>NAD(+)</name>
        <dbReference type="ChEBI" id="CHEBI:57540"/>
    </ligand>
</feature>
<feature type="binding site" evidence="1">
    <location>
        <begin position="43"/>
        <end position="44"/>
    </location>
    <ligand>
        <name>NAD(+)</name>
        <dbReference type="ChEBI" id="CHEBI:57540"/>
    </ligand>
</feature>
<feature type="binding site" evidence="1">
    <location>
        <position position="225"/>
    </location>
    <ligand>
        <name>S-adenosyl-L-methionine</name>
        <dbReference type="ChEBI" id="CHEBI:59789"/>
    </ligand>
</feature>
<feature type="binding site" evidence="1">
    <location>
        <begin position="301"/>
        <end position="303"/>
    </location>
    <ligand>
        <name>S-adenosyl-L-methionine</name>
        <dbReference type="ChEBI" id="CHEBI:59789"/>
    </ligand>
</feature>
<feature type="binding site" evidence="1">
    <location>
        <position position="306"/>
    </location>
    <ligand>
        <name>S-adenosyl-L-methionine</name>
        <dbReference type="ChEBI" id="CHEBI:59789"/>
    </ligand>
</feature>
<feature type="binding site" evidence="1">
    <location>
        <begin position="331"/>
        <end position="332"/>
    </location>
    <ligand>
        <name>S-adenosyl-L-methionine</name>
        <dbReference type="ChEBI" id="CHEBI:59789"/>
    </ligand>
</feature>
<feature type="binding site" evidence="1">
    <location>
        <position position="383"/>
    </location>
    <ligand>
        <name>S-adenosyl-L-methionine</name>
        <dbReference type="ChEBI" id="CHEBI:59789"/>
    </ligand>
</feature>
<feature type="binding site" evidence="1">
    <location>
        <position position="412"/>
    </location>
    <ligand>
        <name>S-adenosyl-L-methionine</name>
        <dbReference type="ChEBI" id="CHEBI:59789"/>
    </ligand>
</feature>
<feature type="modified residue" description="Phosphoserine" evidence="1">
    <location>
        <position position="128"/>
    </location>
</feature>
<reference key="1">
    <citation type="journal article" date="2007" name="Curr. Biol.">
        <title>Reduced genome of the thioautotrophic intracellular symbiont in a deep-sea clam, Calyptogena okutanii.</title>
        <authorList>
            <person name="Kuwahara H."/>
            <person name="Yoshida T."/>
            <person name="Takaki Y."/>
            <person name="Shimamura S."/>
            <person name="Nishi S."/>
            <person name="Harada M."/>
            <person name="Matsuyama K."/>
            <person name="Takishita K."/>
            <person name="Kawato M."/>
            <person name="Uematsu K."/>
            <person name="Fujiwara Y."/>
            <person name="Sato T."/>
            <person name="Kato C."/>
            <person name="Kitagawa M."/>
            <person name="Kato I."/>
            <person name="Maruyama T."/>
        </authorList>
    </citation>
    <scope>NUCLEOTIDE SEQUENCE [LARGE SCALE GENOMIC DNA]</scope>
    <source>
        <strain>HA</strain>
    </source>
</reference>
<keyword id="KW-0169">Cobalamin biosynthesis</keyword>
<keyword id="KW-0456">Lyase</keyword>
<keyword id="KW-0489">Methyltransferase</keyword>
<keyword id="KW-0511">Multifunctional enzyme</keyword>
<keyword id="KW-0520">NAD</keyword>
<keyword id="KW-0560">Oxidoreductase</keyword>
<keyword id="KW-0597">Phosphoprotein</keyword>
<keyword id="KW-0627">Porphyrin biosynthesis</keyword>
<keyword id="KW-1185">Reference proteome</keyword>
<keyword id="KW-0949">S-adenosyl-L-methionine</keyword>
<keyword id="KW-0808">Transferase</keyword>